<keyword id="KW-0072">Autophagy</keyword>
<keyword id="KW-0963">Cytoplasm</keyword>
<keyword id="KW-0653">Protein transport</keyword>
<keyword id="KW-1185">Reference proteome</keyword>
<keyword id="KW-0808">Transferase</keyword>
<keyword id="KW-0813">Transport</keyword>
<keyword id="KW-0833">Ubl conjugation pathway</keyword>
<evidence type="ECO:0000250" key="1"/>
<evidence type="ECO:0000305" key="2"/>
<dbReference type="EC" id="2.3.2.-"/>
<dbReference type="EMBL" id="AAFI02000004">
    <property type="protein sequence ID" value="EAL73009.1"/>
    <property type="molecule type" value="Genomic_DNA"/>
</dbReference>
<dbReference type="RefSeq" id="XP_647008.1">
    <property type="nucleotide sequence ID" value="XM_641916.1"/>
</dbReference>
<dbReference type="SMR" id="Q55EL2"/>
<dbReference type="FunCoup" id="Q55EL2">
    <property type="interactions" value="71"/>
</dbReference>
<dbReference type="STRING" id="44689.Q55EL2"/>
<dbReference type="PaxDb" id="44689-DDB0252608"/>
<dbReference type="EnsemblProtists" id="EAL73009">
    <property type="protein sequence ID" value="EAL73009"/>
    <property type="gene ID" value="DDB_G0268840"/>
</dbReference>
<dbReference type="GeneID" id="8616701"/>
<dbReference type="KEGG" id="ddi:DDB_G0268840"/>
<dbReference type="dictyBase" id="DDB_G0268840">
    <property type="gene designation" value="atg10"/>
</dbReference>
<dbReference type="VEuPathDB" id="AmoebaDB:DDB_G0268840"/>
<dbReference type="eggNOG" id="KOG4741">
    <property type="taxonomic scope" value="Eukaryota"/>
</dbReference>
<dbReference type="HOGENOM" id="CLU_072332_3_0_1"/>
<dbReference type="InParanoid" id="Q55EL2"/>
<dbReference type="OMA" id="DSKWTFI"/>
<dbReference type="PhylomeDB" id="Q55EL2"/>
<dbReference type="PRO" id="PR:Q55EL2"/>
<dbReference type="Proteomes" id="UP000002195">
    <property type="component" value="Chromosome 1"/>
</dbReference>
<dbReference type="GO" id="GO:0000407">
    <property type="term" value="C:phagophore assembly site"/>
    <property type="evidence" value="ECO:0000318"/>
    <property type="project" value="GO_Central"/>
</dbReference>
<dbReference type="GO" id="GO:0019787">
    <property type="term" value="F:ubiquitin-like protein transferase activity"/>
    <property type="evidence" value="ECO:0000318"/>
    <property type="project" value="GO_Central"/>
</dbReference>
<dbReference type="GO" id="GO:0000045">
    <property type="term" value="P:autophagosome assembly"/>
    <property type="evidence" value="ECO:0000318"/>
    <property type="project" value="GO_Central"/>
</dbReference>
<dbReference type="GO" id="GO:0061723">
    <property type="term" value="P:glycophagy"/>
    <property type="evidence" value="ECO:0000318"/>
    <property type="project" value="GO_Central"/>
</dbReference>
<dbReference type="GO" id="GO:0044804">
    <property type="term" value="P:nucleophagy"/>
    <property type="evidence" value="ECO:0000318"/>
    <property type="project" value="GO_Central"/>
</dbReference>
<dbReference type="GO" id="GO:0015031">
    <property type="term" value="P:protein transport"/>
    <property type="evidence" value="ECO:0007669"/>
    <property type="project" value="UniProtKB-KW"/>
</dbReference>
<dbReference type="Gene3D" id="3.30.1460.50">
    <property type="match status" value="1"/>
</dbReference>
<dbReference type="InterPro" id="IPR007135">
    <property type="entry name" value="Atg3/Atg10"/>
</dbReference>
<dbReference type="PANTHER" id="PTHR14957">
    <property type="entry name" value="UBIQUITIN-LIKE-CONJUGATING ENZYME ATG10"/>
    <property type="match status" value="1"/>
</dbReference>
<dbReference type="PANTHER" id="PTHR14957:SF1">
    <property type="entry name" value="UBIQUITIN-LIKE-CONJUGATING ENZYME ATG10"/>
    <property type="match status" value="1"/>
</dbReference>
<dbReference type="Pfam" id="PF03987">
    <property type="entry name" value="Autophagy_act_C"/>
    <property type="match status" value="1"/>
</dbReference>
<protein>
    <recommendedName>
        <fullName>Ubiquitin-like-conjugating enzyme ATG10</fullName>
        <ecNumber>2.3.2.-</ecNumber>
    </recommendedName>
    <alternativeName>
        <fullName>Autophagy-related protein 10</fullName>
    </alternativeName>
</protein>
<accession>Q55EL2</accession>
<name>ATG10_DICDI</name>
<organism>
    <name type="scientific">Dictyostelium discoideum</name>
    <name type="common">Social amoeba</name>
    <dbReference type="NCBI Taxonomy" id="44689"/>
    <lineage>
        <taxon>Eukaryota</taxon>
        <taxon>Amoebozoa</taxon>
        <taxon>Evosea</taxon>
        <taxon>Eumycetozoa</taxon>
        <taxon>Dictyostelia</taxon>
        <taxon>Dictyosteliales</taxon>
        <taxon>Dictyosteliaceae</taxon>
        <taxon>Dictyostelium</taxon>
    </lineage>
</organism>
<feature type="chain" id="PRO_0000328150" description="Ubiquitin-like-conjugating enzyme ATG10">
    <location>
        <begin position="1"/>
        <end position="230"/>
    </location>
</feature>
<feature type="active site" description="Glycyl thioester intermediate" evidence="1">
    <location>
        <position position="174"/>
    </location>
</feature>
<sequence length="230" mass="27236">MLTSKDFRDQAINLIKKWNNIIDEIPWQWNQINELNNESKGYFTTKRYHKINNNNNNNNNNNIENKNNNNIENFEEIKETIDDSSTTIIKSNNNNNENNIIIFQFDIIYSKSYQVPVLYLNGFSSFDSSPLSWNEIWNNLPLSNLDKNQQSTIPYITQVEHPILGNPCYQLHPCETDNLMKLILLKEKDYNDNNDKKEYFKDYYLLSWLSIIGPMVNIKIPFDLLKNNNI</sequence>
<proteinExistence type="inferred from homology"/>
<gene>
    <name type="primary">atg10</name>
    <name type="synonym">apg10</name>
    <name type="ORF">DDB_G0268840</name>
</gene>
<comment type="function">
    <text evidence="1">E2-like enzyme involved in autophagy. Acts as an E2-like enzyme that catalyzes the conjugation of atg12 to atg5. atg12 conjugation to atg5 is required for autophagy. Likely serves as an atg5-recognition molecule (By similarity).</text>
</comment>
<comment type="subcellular location">
    <subcellularLocation>
        <location evidence="1">Cytoplasm</location>
    </subcellularLocation>
</comment>
<comment type="similarity">
    <text evidence="2">Belongs to the ATG10 family.</text>
</comment>
<reference key="1">
    <citation type="journal article" date="2005" name="Nature">
        <title>The genome of the social amoeba Dictyostelium discoideum.</title>
        <authorList>
            <person name="Eichinger L."/>
            <person name="Pachebat J.A."/>
            <person name="Gloeckner G."/>
            <person name="Rajandream M.A."/>
            <person name="Sucgang R."/>
            <person name="Berriman M."/>
            <person name="Song J."/>
            <person name="Olsen R."/>
            <person name="Szafranski K."/>
            <person name="Xu Q."/>
            <person name="Tunggal B."/>
            <person name="Kummerfeld S."/>
            <person name="Madera M."/>
            <person name="Konfortov B.A."/>
            <person name="Rivero F."/>
            <person name="Bankier A.T."/>
            <person name="Lehmann R."/>
            <person name="Hamlin N."/>
            <person name="Davies R."/>
            <person name="Gaudet P."/>
            <person name="Fey P."/>
            <person name="Pilcher K."/>
            <person name="Chen G."/>
            <person name="Saunders D."/>
            <person name="Sodergren E.J."/>
            <person name="Davis P."/>
            <person name="Kerhornou A."/>
            <person name="Nie X."/>
            <person name="Hall N."/>
            <person name="Anjard C."/>
            <person name="Hemphill L."/>
            <person name="Bason N."/>
            <person name="Farbrother P."/>
            <person name="Desany B."/>
            <person name="Just E."/>
            <person name="Morio T."/>
            <person name="Rost R."/>
            <person name="Churcher C.M."/>
            <person name="Cooper J."/>
            <person name="Haydock S."/>
            <person name="van Driessche N."/>
            <person name="Cronin A."/>
            <person name="Goodhead I."/>
            <person name="Muzny D.M."/>
            <person name="Mourier T."/>
            <person name="Pain A."/>
            <person name="Lu M."/>
            <person name="Harper D."/>
            <person name="Lindsay R."/>
            <person name="Hauser H."/>
            <person name="James K.D."/>
            <person name="Quiles M."/>
            <person name="Madan Babu M."/>
            <person name="Saito T."/>
            <person name="Buchrieser C."/>
            <person name="Wardroper A."/>
            <person name="Felder M."/>
            <person name="Thangavelu M."/>
            <person name="Johnson D."/>
            <person name="Knights A."/>
            <person name="Loulseged H."/>
            <person name="Mungall K.L."/>
            <person name="Oliver K."/>
            <person name="Price C."/>
            <person name="Quail M.A."/>
            <person name="Urushihara H."/>
            <person name="Hernandez J."/>
            <person name="Rabbinowitsch E."/>
            <person name="Steffen D."/>
            <person name="Sanders M."/>
            <person name="Ma J."/>
            <person name="Kohara Y."/>
            <person name="Sharp S."/>
            <person name="Simmonds M.N."/>
            <person name="Spiegler S."/>
            <person name="Tivey A."/>
            <person name="Sugano S."/>
            <person name="White B."/>
            <person name="Walker D."/>
            <person name="Woodward J.R."/>
            <person name="Winckler T."/>
            <person name="Tanaka Y."/>
            <person name="Shaulsky G."/>
            <person name="Schleicher M."/>
            <person name="Weinstock G.M."/>
            <person name="Rosenthal A."/>
            <person name="Cox E.C."/>
            <person name="Chisholm R.L."/>
            <person name="Gibbs R.A."/>
            <person name="Loomis W.F."/>
            <person name="Platzer M."/>
            <person name="Kay R.R."/>
            <person name="Williams J.G."/>
            <person name="Dear P.H."/>
            <person name="Noegel A.A."/>
            <person name="Barrell B.G."/>
            <person name="Kuspa A."/>
        </authorList>
    </citation>
    <scope>NUCLEOTIDE SEQUENCE [LARGE SCALE GENOMIC DNA]</scope>
    <source>
        <strain>AX4</strain>
    </source>
</reference>